<organism>
    <name type="scientific">Listeria innocua serovar 6a (strain ATCC BAA-680 / CLIP 11262)</name>
    <dbReference type="NCBI Taxonomy" id="272626"/>
    <lineage>
        <taxon>Bacteria</taxon>
        <taxon>Bacillati</taxon>
        <taxon>Bacillota</taxon>
        <taxon>Bacilli</taxon>
        <taxon>Bacillales</taxon>
        <taxon>Listeriaceae</taxon>
        <taxon>Listeria</taxon>
    </lineage>
</organism>
<gene>
    <name evidence="1" type="primary">rsmA</name>
    <name evidence="1" type="synonym">ksgA</name>
    <name type="ordered locus">lin0227</name>
</gene>
<reference key="1">
    <citation type="journal article" date="2001" name="Science">
        <title>Comparative genomics of Listeria species.</title>
        <authorList>
            <person name="Glaser P."/>
            <person name="Frangeul L."/>
            <person name="Buchrieser C."/>
            <person name="Rusniok C."/>
            <person name="Amend A."/>
            <person name="Baquero F."/>
            <person name="Berche P."/>
            <person name="Bloecker H."/>
            <person name="Brandt P."/>
            <person name="Chakraborty T."/>
            <person name="Charbit A."/>
            <person name="Chetouani F."/>
            <person name="Couve E."/>
            <person name="de Daruvar A."/>
            <person name="Dehoux P."/>
            <person name="Domann E."/>
            <person name="Dominguez-Bernal G."/>
            <person name="Duchaud E."/>
            <person name="Durant L."/>
            <person name="Dussurget O."/>
            <person name="Entian K.-D."/>
            <person name="Fsihi H."/>
            <person name="Garcia-del Portillo F."/>
            <person name="Garrido P."/>
            <person name="Gautier L."/>
            <person name="Goebel W."/>
            <person name="Gomez-Lopez N."/>
            <person name="Hain T."/>
            <person name="Hauf J."/>
            <person name="Jackson D."/>
            <person name="Jones L.-M."/>
            <person name="Kaerst U."/>
            <person name="Kreft J."/>
            <person name="Kuhn M."/>
            <person name="Kunst F."/>
            <person name="Kurapkat G."/>
            <person name="Madueno E."/>
            <person name="Maitournam A."/>
            <person name="Mata Vicente J."/>
            <person name="Ng E."/>
            <person name="Nedjari H."/>
            <person name="Nordsiek G."/>
            <person name="Novella S."/>
            <person name="de Pablos B."/>
            <person name="Perez-Diaz J.-C."/>
            <person name="Purcell R."/>
            <person name="Remmel B."/>
            <person name="Rose M."/>
            <person name="Schlueter T."/>
            <person name="Simoes N."/>
            <person name="Tierrez A."/>
            <person name="Vazquez-Boland J.-A."/>
            <person name="Voss H."/>
            <person name="Wehland J."/>
            <person name="Cossart P."/>
        </authorList>
    </citation>
    <scope>NUCLEOTIDE SEQUENCE [LARGE SCALE GENOMIC DNA]</scope>
    <source>
        <strain>ATCC BAA-680 / CLIP 11262</strain>
    </source>
</reference>
<feature type="chain" id="PRO_0000101551" description="Ribosomal RNA small subunit methyltransferase A">
    <location>
        <begin position="1"/>
        <end position="295"/>
    </location>
</feature>
<feature type="binding site" evidence="1">
    <location>
        <position position="29"/>
    </location>
    <ligand>
        <name>S-adenosyl-L-methionine</name>
        <dbReference type="ChEBI" id="CHEBI:59789"/>
    </ligand>
</feature>
<feature type="binding site" evidence="1">
    <location>
        <position position="31"/>
    </location>
    <ligand>
        <name>S-adenosyl-L-methionine</name>
        <dbReference type="ChEBI" id="CHEBI:59789"/>
    </ligand>
</feature>
<feature type="binding site" evidence="1">
    <location>
        <position position="56"/>
    </location>
    <ligand>
        <name>S-adenosyl-L-methionine</name>
        <dbReference type="ChEBI" id="CHEBI:59789"/>
    </ligand>
</feature>
<feature type="binding site" evidence="1">
    <location>
        <position position="77"/>
    </location>
    <ligand>
        <name>S-adenosyl-L-methionine</name>
        <dbReference type="ChEBI" id="CHEBI:59789"/>
    </ligand>
</feature>
<feature type="binding site" evidence="1">
    <location>
        <position position="102"/>
    </location>
    <ligand>
        <name>S-adenosyl-L-methionine</name>
        <dbReference type="ChEBI" id="CHEBI:59789"/>
    </ligand>
</feature>
<feature type="binding site" evidence="1">
    <location>
        <position position="128"/>
    </location>
    <ligand>
        <name>S-adenosyl-L-methionine</name>
        <dbReference type="ChEBI" id="CHEBI:59789"/>
    </ligand>
</feature>
<name>RSMA_LISIN</name>
<protein>
    <recommendedName>
        <fullName evidence="1">Ribosomal RNA small subunit methyltransferase A</fullName>
        <ecNumber evidence="1">2.1.1.182</ecNumber>
    </recommendedName>
    <alternativeName>
        <fullName evidence="1">16S rRNA (adenine(1518)-N(6)/adenine(1519)-N(6))-dimethyltransferase</fullName>
    </alternativeName>
    <alternativeName>
        <fullName evidence="1">16S rRNA dimethyladenosine transferase</fullName>
    </alternativeName>
    <alternativeName>
        <fullName evidence="1">16S rRNA dimethylase</fullName>
    </alternativeName>
    <alternativeName>
        <fullName evidence="1">S-adenosylmethionine-6-N', N'-adenosyl(rRNA) dimethyltransferase</fullName>
    </alternativeName>
</protein>
<evidence type="ECO:0000255" key="1">
    <source>
        <dbReference type="HAMAP-Rule" id="MF_00607"/>
    </source>
</evidence>
<accession>Q92F79</accession>
<comment type="function">
    <text evidence="1">Specifically dimethylates two adjacent adenosines (A1518 and A1519) in the loop of a conserved hairpin near the 3'-end of 16S rRNA in the 30S particle. May play a critical role in biogenesis of 30S subunits.</text>
</comment>
<comment type="catalytic activity">
    <reaction evidence="1">
        <text>adenosine(1518)/adenosine(1519) in 16S rRNA + 4 S-adenosyl-L-methionine = N(6)-dimethyladenosine(1518)/N(6)-dimethyladenosine(1519) in 16S rRNA + 4 S-adenosyl-L-homocysteine + 4 H(+)</text>
        <dbReference type="Rhea" id="RHEA:19609"/>
        <dbReference type="Rhea" id="RHEA-COMP:10232"/>
        <dbReference type="Rhea" id="RHEA-COMP:10233"/>
        <dbReference type="ChEBI" id="CHEBI:15378"/>
        <dbReference type="ChEBI" id="CHEBI:57856"/>
        <dbReference type="ChEBI" id="CHEBI:59789"/>
        <dbReference type="ChEBI" id="CHEBI:74411"/>
        <dbReference type="ChEBI" id="CHEBI:74493"/>
        <dbReference type="EC" id="2.1.1.182"/>
    </reaction>
</comment>
<comment type="subcellular location">
    <subcellularLocation>
        <location evidence="1">Cytoplasm</location>
    </subcellularLocation>
</comment>
<comment type="similarity">
    <text evidence="1">Belongs to the class I-like SAM-binding methyltransferase superfamily. rRNA adenine N(6)-methyltransferase family. RsmA subfamily.</text>
</comment>
<sequence length="295" mass="33181">MSKDIATPGRTTEILKKYGFLFKKSLGQNFLIDSNILTRITDTAEITKETNVIEIGPGIGALTEQLAKTANEVVAFEIDQRLLPILDDTLSNYDNVRVVHNDVLKADVAEVITEQFAKPELPLKIVANLPYYVTTPIILKLLHDNIPADSMTFMLQKEVADRISAVPSTKSYGSLTIAIQFYMEAELAFIVPKTVFMPQPNVDSAVIHLKRRKEPLAKVNDEEFFFEVTRASFAQRRKTLWNNLASKFPALKPRKEELIEGLNAIGIDLIRRGETLDIPEFAKLSNFLADFLAEK</sequence>
<dbReference type="EC" id="2.1.1.182" evidence="1"/>
<dbReference type="EMBL" id="AL596163">
    <property type="protein sequence ID" value="CAC95460.1"/>
    <property type="molecule type" value="Genomic_DNA"/>
</dbReference>
<dbReference type="PIR" id="AD1461">
    <property type="entry name" value="AD1461"/>
</dbReference>
<dbReference type="RefSeq" id="WP_010990286.1">
    <property type="nucleotide sequence ID" value="NC_003212.1"/>
</dbReference>
<dbReference type="SMR" id="Q92F79"/>
<dbReference type="STRING" id="272626.gene:17564539"/>
<dbReference type="KEGG" id="lin:ksgA"/>
<dbReference type="eggNOG" id="COG0030">
    <property type="taxonomic scope" value="Bacteria"/>
</dbReference>
<dbReference type="HOGENOM" id="CLU_041220_0_0_9"/>
<dbReference type="OrthoDB" id="9814755at2"/>
<dbReference type="Proteomes" id="UP000002513">
    <property type="component" value="Chromosome"/>
</dbReference>
<dbReference type="GO" id="GO:0005829">
    <property type="term" value="C:cytosol"/>
    <property type="evidence" value="ECO:0007669"/>
    <property type="project" value="TreeGrafter"/>
</dbReference>
<dbReference type="GO" id="GO:0052908">
    <property type="term" value="F:16S rRNA (adenine(1518)-N(6)/adenine(1519)-N(6))-dimethyltransferase activity"/>
    <property type="evidence" value="ECO:0007669"/>
    <property type="project" value="UniProtKB-EC"/>
</dbReference>
<dbReference type="GO" id="GO:0003723">
    <property type="term" value="F:RNA binding"/>
    <property type="evidence" value="ECO:0007669"/>
    <property type="project" value="UniProtKB-KW"/>
</dbReference>
<dbReference type="CDD" id="cd02440">
    <property type="entry name" value="AdoMet_MTases"/>
    <property type="match status" value="1"/>
</dbReference>
<dbReference type="FunFam" id="1.10.8.100:FF:000002">
    <property type="entry name" value="Ribosomal RNA small subunit methyltransferase A"/>
    <property type="match status" value="1"/>
</dbReference>
<dbReference type="FunFam" id="3.40.50.150:FF:000023">
    <property type="entry name" value="Ribosomal RNA small subunit methyltransferase A"/>
    <property type="match status" value="1"/>
</dbReference>
<dbReference type="Gene3D" id="1.10.8.100">
    <property type="entry name" value="Ribosomal RNA adenine dimethylase-like, domain 2"/>
    <property type="match status" value="1"/>
</dbReference>
<dbReference type="Gene3D" id="3.40.50.150">
    <property type="entry name" value="Vaccinia Virus protein VP39"/>
    <property type="match status" value="1"/>
</dbReference>
<dbReference type="HAMAP" id="MF_00607">
    <property type="entry name" value="16SrRNA_methyltr_A"/>
    <property type="match status" value="1"/>
</dbReference>
<dbReference type="InterPro" id="IPR001737">
    <property type="entry name" value="KsgA/Erm"/>
</dbReference>
<dbReference type="InterPro" id="IPR023165">
    <property type="entry name" value="rRNA_Ade_diMease-like_C"/>
</dbReference>
<dbReference type="InterPro" id="IPR020596">
    <property type="entry name" value="rRNA_Ade_Mease_Trfase_CS"/>
</dbReference>
<dbReference type="InterPro" id="IPR020598">
    <property type="entry name" value="rRNA_Ade_methylase_Trfase_N"/>
</dbReference>
<dbReference type="InterPro" id="IPR011530">
    <property type="entry name" value="rRNA_adenine_dimethylase"/>
</dbReference>
<dbReference type="InterPro" id="IPR029063">
    <property type="entry name" value="SAM-dependent_MTases_sf"/>
</dbReference>
<dbReference type="NCBIfam" id="TIGR00755">
    <property type="entry name" value="ksgA"/>
    <property type="match status" value="1"/>
</dbReference>
<dbReference type="PANTHER" id="PTHR11727">
    <property type="entry name" value="DIMETHYLADENOSINE TRANSFERASE"/>
    <property type="match status" value="1"/>
</dbReference>
<dbReference type="PANTHER" id="PTHR11727:SF7">
    <property type="entry name" value="DIMETHYLADENOSINE TRANSFERASE-RELATED"/>
    <property type="match status" value="1"/>
</dbReference>
<dbReference type="Pfam" id="PF00398">
    <property type="entry name" value="RrnaAD"/>
    <property type="match status" value="1"/>
</dbReference>
<dbReference type="SMART" id="SM00650">
    <property type="entry name" value="rADc"/>
    <property type="match status" value="1"/>
</dbReference>
<dbReference type="SUPFAM" id="SSF53335">
    <property type="entry name" value="S-adenosyl-L-methionine-dependent methyltransferases"/>
    <property type="match status" value="1"/>
</dbReference>
<dbReference type="PROSITE" id="PS01131">
    <property type="entry name" value="RRNA_A_DIMETH"/>
    <property type="match status" value="1"/>
</dbReference>
<dbReference type="PROSITE" id="PS51689">
    <property type="entry name" value="SAM_RNA_A_N6_MT"/>
    <property type="match status" value="1"/>
</dbReference>
<keyword id="KW-0963">Cytoplasm</keyword>
<keyword id="KW-0489">Methyltransferase</keyword>
<keyword id="KW-0694">RNA-binding</keyword>
<keyword id="KW-0698">rRNA processing</keyword>
<keyword id="KW-0949">S-adenosyl-L-methionine</keyword>
<keyword id="KW-0808">Transferase</keyword>
<proteinExistence type="inferred from homology"/>